<sequence length="428" mass="46203">MRVVILGSGVVGVASAYYLARAGHEVTVIDREAGPALDTSFANAGQISPGYAAPWAAPGVPLKAVKWMFEKHAPLAIRLDGTRFQLQWMWQMLRNCTTERYALNKGRMVRLAEYSRDCLQALRAETAIQYEGRTGGTLQVFRTQQQLDGAAKDIAVLREANVPFELLSSDELKKAEPALAAVSHKLTGGLRLPGDETGDCQLFTTRLAALAEQLGVKFRFNTRIDALAVAGGKIAGVQCGGEMVRADAYVVALGSYSTNLVASLVKIPVYPLKGYSITAPIVDAAKAPVSTVLDETYKIAITRFDDRIRVGGMAEIVGFDKRLRDARRGTLEMCVNDLFPGGGDTAKATFWTGLRPMTPDGTPIVGRTPVPNLFLNTGHGTLGWTMSCGSGQLLADLMSGKKPVIRADDLSVHRYLSETDGEHRPAYA</sequence>
<protein>
    <recommendedName>
        <fullName evidence="1">D-amino acid dehydrogenase</fullName>
        <ecNumber evidence="1">1.4.99.-</ecNumber>
    </recommendedName>
</protein>
<organism>
    <name type="scientific">Burkholderia pseudomallei (strain 1710b)</name>
    <dbReference type="NCBI Taxonomy" id="320372"/>
    <lineage>
        <taxon>Bacteria</taxon>
        <taxon>Pseudomonadati</taxon>
        <taxon>Pseudomonadota</taxon>
        <taxon>Betaproteobacteria</taxon>
        <taxon>Burkholderiales</taxon>
        <taxon>Burkholderiaceae</taxon>
        <taxon>Burkholderia</taxon>
        <taxon>pseudomallei group</taxon>
    </lineage>
</organism>
<comment type="function">
    <text evidence="1">Oxidative deamination of D-amino acids.</text>
</comment>
<comment type="catalytic activity">
    <reaction evidence="1">
        <text>a D-alpha-amino acid + A + H2O = a 2-oxocarboxylate + AH2 + NH4(+)</text>
        <dbReference type="Rhea" id="RHEA:18125"/>
        <dbReference type="ChEBI" id="CHEBI:13193"/>
        <dbReference type="ChEBI" id="CHEBI:15377"/>
        <dbReference type="ChEBI" id="CHEBI:17499"/>
        <dbReference type="ChEBI" id="CHEBI:28938"/>
        <dbReference type="ChEBI" id="CHEBI:35179"/>
        <dbReference type="ChEBI" id="CHEBI:59871"/>
    </reaction>
</comment>
<comment type="cofactor">
    <cofactor evidence="1">
        <name>FAD</name>
        <dbReference type="ChEBI" id="CHEBI:57692"/>
    </cofactor>
</comment>
<comment type="pathway">
    <text>Amino-acid degradation; D-alanine degradation; NH(3) and pyruvate from D-alanine: step 1/1.</text>
</comment>
<comment type="similarity">
    <text evidence="1">Belongs to the DadA oxidoreductase family.</text>
</comment>
<evidence type="ECO:0000255" key="1">
    <source>
        <dbReference type="HAMAP-Rule" id="MF_01202"/>
    </source>
</evidence>
<dbReference type="EC" id="1.4.99.-" evidence="1"/>
<dbReference type="EMBL" id="CP000124">
    <property type="protein sequence ID" value="ABA49682.1"/>
    <property type="molecule type" value="Genomic_DNA"/>
</dbReference>
<dbReference type="RefSeq" id="WP_004527500.1">
    <property type="nucleotide sequence ID" value="NC_007434.1"/>
</dbReference>
<dbReference type="SMR" id="Q3JQ00"/>
<dbReference type="EnsemblBacteria" id="ABA49682">
    <property type="protein sequence ID" value="ABA49682"/>
    <property type="gene ID" value="BURPS1710b_2974"/>
</dbReference>
<dbReference type="KEGG" id="bpm:BURPS1710b_2974"/>
<dbReference type="HOGENOM" id="CLU_007884_9_2_4"/>
<dbReference type="UniPathway" id="UPA00043">
    <property type="reaction ID" value="UER00498"/>
</dbReference>
<dbReference type="Proteomes" id="UP000002700">
    <property type="component" value="Chromosome I"/>
</dbReference>
<dbReference type="GO" id="GO:0005737">
    <property type="term" value="C:cytoplasm"/>
    <property type="evidence" value="ECO:0007669"/>
    <property type="project" value="TreeGrafter"/>
</dbReference>
<dbReference type="GO" id="GO:0005886">
    <property type="term" value="C:plasma membrane"/>
    <property type="evidence" value="ECO:0007669"/>
    <property type="project" value="TreeGrafter"/>
</dbReference>
<dbReference type="GO" id="GO:0008718">
    <property type="term" value="F:D-amino-acid dehydrogenase activity"/>
    <property type="evidence" value="ECO:0007669"/>
    <property type="project" value="UniProtKB-UniRule"/>
</dbReference>
<dbReference type="GO" id="GO:0055130">
    <property type="term" value="P:D-alanine catabolic process"/>
    <property type="evidence" value="ECO:0007669"/>
    <property type="project" value="UniProtKB-UniPathway"/>
</dbReference>
<dbReference type="FunFam" id="3.50.50.60:FF:000020">
    <property type="entry name" value="D-amino acid dehydrogenase"/>
    <property type="match status" value="1"/>
</dbReference>
<dbReference type="Gene3D" id="3.30.9.10">
    <property type="entry name" value="D-Amino Acid Oxidase, subunit A, domain 2"/>
    <property type="match status" value="1"/>
</dbReference>
<dbReference type="Gene3D" id="3.50.50.60">
    <property type="entry name" value="FAD/NAD(P)-binding domain"/>
    <property type="match status" value="2"/>
</dbReference>
<dbReference type="HAMAP" id="MF_01202">
    <property type="entry name" value="DadA"/>
    <property type="match status" value="1"/>
</dbReference>
<dbReference type="InterPro" id="IPR023080">
    <property type="entry name" value="DadA"/>
</dbReference>
<dbReference type="InterPro" id="IPR006076">
    <property type="entry name" value="FAD-dep_OxRdtase"/>
</dbReference>
<dbReference type="InterPro" id="IPR036188">
    <property type="entry name" value="FAD/NAD-bd_sf"/>
</dbReference>
<dbReference type="NCBIfam" id="NF001933">
    <property type="entry name" value="PRK00711.1"/>
    <property type="match status" value="1"/>
</dbReference>
<dbReference type="PANTHER" id="PTHR13847:SF280">
    <property type="entry name" value="D-AMINO ACID DEHYDROGENASE"/>
    <property type="match status" value="1"/>
</dbReference>
<dbReference type="PANTHER" id="PTHR13847">
    <property type="entry name" value="SARCOSINE DEHYDROGENASE-RELATED"/>
    <property type="match status" value="1"/>
</dbReference>
<dbReference type="Pfam" id="PF01266">
    <property type="entry name" value="DAO"/>
    <property type="match status" value="1"/>
</dbReference>
<dbReference type="SUPFAM" id="SSF54373">
    <property type="entry name" value="FAD-linked reductases, C-terminal domain"/>
    <property type="match status" value="1"/>
</dbReference>
<dbReference type="SUPFAM" id="SSF51905">
    <property type="entry name" value="FAD/NAD(P)-binding domain"/>
    <property type="match status" value="1"/>
</dbReference>
<proteinExistence type="inferred from homology"/>
<name>DADA_BURP1</name>
<feature type="chain" id="PRO_1000066080" description="D-amino acid dehydrogenase">
    <location>
        <begin position="1"/>
        <end position="428"/>
    </location>
</feature>
<feature type="binding site" evidence="1">
    <location>
        <begin position="3"/>
        <end position="17"/>
    </location>
    <ligand>
        <name>FAD</name>
        <dbReference type="ChEBI" id="CHEBI:57692"/>
    </ligand>
</feature>
<keyword id="KW-0274">FAD</keyword>
<keyword id="KW-0285">Flavoprotein</keyword>
<keyword id="KW-0560">Oxidoreductase</keyword>
<accession>Q3JQ00</accession>
<reference key="1">
    <citation type="journal article" date="2010" name="Genome Biol. Evol.">
        <title>Continuing evolution of Burkholderia mallei through genome reduction and large-scale rearrangements.</title>
        <authorList>
            <person name="Losada L."/>
            <person name="Ronning C.M."/>
            <person name="DeShazer D."/>
            <person name="Woods D."/>
            <person name="Fedorova N."/>
            <person name="Kim H.S."/>
            <person name="Shabalina S.A."/>
            <person name="Pearson T.R."/>
            <person name="Brinkac L."/>
            <person name="Tan P."/>
            <person name="Nandi T."/>
            <person name="Crabtree J."/>
            <person name="Badger J."/>
            <person name="Beckstrom-Sternberg S."/>
            <person name="Saqib M."/>
            <person name="Schutzer S.E."/>
            <person name="Keim P."/>
            <person name="Nierman W.C."/>
        </authorList>
    </citation>
    <scope>NUCLEOTIDE SEQUENCE [LARGE SCALE GENOMIC DNA]</scope>
    <source>
        <strain>1710b</strain>
    </source>
</reference>
<gene>
    <name evidence="1" type="primary">dadA</name>
    <name type="ordered locus">BURPS1710b_2974</name>
</gene>